<name>SYL_HAEI8</name>
<evidence type="ECO:0000255" key="1">
    <source>
        <dbReference type="HAMAP-Rule" id="MF_00049"/>
    </source>
</evidence>
<gene>
    <name evidence="1" type="primary">leuS</name>
    <name type="ordered locus">NTHI1090</name>
</gene>
<keyword id="KW-0030">Aminoacyl-tRNA synthetase</keyword>
<keyword id="KW-0067">ATP-binding</keyword>
<keyword id="KW-0963">Cytoplasm</keyword>
<keyword id="KW-0436">Ligase</keyword>
<keyword id="KW-0547">Nucleotide-binding</keyword>
<keyword id="KW-0648">Protein biosynthesis</keyword>
<organism>
    <name type="scientific">Haemophilus influenzae (strain 86-028NP)</name>
    <dbReference type="NCBI Taxonomy" id="281310"/>
    <lineage>
        <taxon>Bacteria</taxon>
        <taxon>Pseudomonadati</taxon>
        <taxon>Pseudomonadota</taxon>
        <taxon>Gammaproteobacteria</taxon>
        <taxon>Pasteurellales</taxon>
        <taxon>Pasteurellaceae</taxon>
        <taxon>Haemophilus</taxon>
    </lineage>
</organism>
<reference key="1">
    <citation type="journal article" date="2005" name="J. Bacteriol.">
        <title>Genomic sequence of an otitis media isolate of nontypeable Haemophilus influenzae: comparative study with H. influenzae serotype d, strain KW20.</title>
        <authorList>
            <person name="Harrison A."/>
            <person name="Dyer D.W."/>
            <person name="Gillaspy A."/>
            <person name="Ray W.C."/>
            <person name="Mungur R."/>
            <person name="Carson M.B."/>
            <person name="Zhong H."/>
            <person name="Gipson J."/>
            <person name="Gipson M."/>
            <person name="Johnson L.S."/>
            <person name="Lewis L."/>
            <person name="Bakaletz L.O."/>
            <person name="Munson R.S. Jr."/>
        </authorList>
    </citation>
    <scope>NUCLEOTIDE SEQUENCE [LARGE SCALE GENOMIC DNA]</scope>
    <source>
        <strain>86-028NP</strain>
    </source>
</reference>
<sequence length="861" mass="97671">MQEQYRPDMIEPKVQQYWAENKVFKAIKDESKEKYYCLSMFPYPSGRLHMGHVRNYTIGDVISRYQRMLGKNVLQPFGWDAFGLPAEGAAIKNKTAPAKWTYENIAYMKKQLQLLGFGFDWDREIATCKPEYYKWEQWFFTELYKKGLVYKKTSTVNWCPNDETVLANEQVHEGCCWRCDTPVEQKEIPQWFIKITDYAEQLLGGLDALPQWPDMVKTMQRNWIGRSEGVEITFDVANTNEKVAVYTTRPDTFYGVSYLGIAAAHPLASLAAQNNSELAAFIQEAKNAKVAEADLATMEKKGMATGLFAIHPLTGEKLPIWVANFVLMHYGTGAVMAVPAHDQRDFEFAQKYSLQIKQVIEPIADEEIDLTKQAFVEHGKLVNSAEFDGKDFDGAFNGIADKLEKLGVGKRQVNYRLRDWGVSRQRYWGAPIPMLTLENGDVVPAPMEDLPIILPEDVVMDGVKNPIKADPNWAKTTLNGAPALKETDTFDTFMESSWYYARYTCPQYQNGMLDAEEANYWLPVDQYIGGIEHATMHLLYFRFFHKLLRDAGFVTSDEPADKLLCQGMVLADAFYYTSPTNERIWVSPTLVTLERDEKGRIIKATDPEGRELVHSGMTKMSKSKNNGIDPQEMVEKYGADTVRLFMMFASPAEMTLEWQESGVEGAKRFLGRVWNLVYQYQQNPAKTSLDITALSAEQKVLRREVHKTIAKVSDDIGRRQTFNTAIAAVMELMNKLTKASLDSEQDRAVMAEALSAVVRMLYPITPHICFELWQALGNESAIDTAEWVKADEAAMVEDEKLIVVQVNGKVRGKVTVAADADEDTVKTIAFADENVKKFIDNQHIVKVIYVVGKLLNVVVKP</sequence>
<feature type="chain" id="PRO_0000152024" description="Leucine--tRNA ligase">
    <location>
        <begin position="1"/>
        <end position="861"/>
    </location>
</feature>
<feature type="short sequence motif" description="'HIGH' region">
    <location>
        <begin position="42"/>
        <end position="52"/>
    </location>
</feature>
<feature type="short sequence motif" description="'KMSKS' region">
    <location>
        <begin position="619"/>
        <end position="623"/>
    </location>
</feature>
<feature type="binding site" evidence="1">
    <location>
        <position position="622"/>
    </location>
    <ligand>
        <name>ATP</name>
        <dbReference type="ChEBI" id="CHEBI:30616"/>
    </ligand>
</feature>
<protein>
    <recommendedName>
        <fullName evidence="1">Leucine--tRNA ligase</fullName>
        <ecNumber evidence="1">6.1.1.4</ecNumber>
    </recommendedName>
    <alternativeName>
        <fullName evidence="1">Leucyl-tRNA synthetase</fullName>
        <shortName evidence="1">LeuRS</shortName>
    </alternativeName>
</protein>
<proteinExistence type="inferred from homology"/>
<comment type="catalytic activity">
    <reaction evidence="1">
        <text>tRNA(Leu) + L-leucine + ATP = L-leucyl-tRNA(Leu) + AMP + diphosphate</text>
        <dbReference type="Rhea" id="RHEA:11688"/>
        <dbReference type="Rhea" id="RHEA-COMP:9613"/>
        <dbReference type="Rhea" id="RHEA-COMP:9622"/>
        <dbReference type="ChEBI" id="CHEBI:30616"/>
        <dbReference type="ChEBI" id="CHEBI:33019"/>
        <dbReference type="ChEBI" id="CHEBI:57427"/>
        <dbReference type="ChEBI" id="CHEBI:78442"/>
        <dbReference type="ChEBI" id="CHEBI:78494"/>
        <dbReference type="ChEBI" id="CHEBI:456215"/>
        <dbReference type="EC" id="6.1.1.4"/>
    </reaction>
</comment>
<comment type="subcellular location">
    <subcellularLocation>
        <location evidence="1">Cytoplasm</location>
    </subcellularLocation>
</comment>
<comment type="similarity">
    <text evidence="1">Belongs to the class-I aminoacyl-tRNA synthetase family.</text>
</comment>
<accession>Q4QLY8</accession>
<dbReference type="EC" id="6.1.1.4" evidence="1"/>
<dbReference type="EMBL" id="CP000057">
    <property type="protein sequence ID" value="AAX87959.1"/>
    <property type="molecule type" value="Genomic_DNA"/>
</dbReference>
<dbReference type="RefSeq" id="WP_011272290.1">
    <property type="nucleotide sequence ID" value="NC_007146.2"/>
</dbReference>
<dbReference type="SMR" id="Q4QLY8"/>
<dbReference type="KEGG" id="hit:NTHI1090"/>
<dbReference type="HOGENOM" id="CLU_004427_0_0_6"/>
<dbReference type="Proteomes" id="UP000002525">
    <property type="component" value="Chromosome"/>
</dbReference>
<dbReference type="GO" id="GO:0005829">
    <property type="term" value="C:cytosol"/>
    <property type="evidence" value="ECO:0007669"/>
    <property type="project" value="TreeGrafter"/>
</dbReference>
<dbReference type="GO" id="GO:0002161">
    <property type="term" value="F:aminoacyl-tRNA deacylase activity"/>
    <property type="evidence" value="ECO:0007669"/>
    <property type="project" value="InterPro"/>
</dbReference>
<dbReference type="GO" id="GO:0005524">
    <property type="term" value="F:ATP binding"/>
    <property type="evidence" value="ECO:0007669"/>
    <property type="project" value="UniProtKB-UniRule"/>
</dbReference>
<dbReference type="GO" id="GO:0004823">
    <property type="term" value="F:leucine-tRNA ligase activity"/>
    <property type="evidence" value="ECO:0007669"/>
    <property type="project" value="UniProtKB-UniRule"/>
</dbReference>
<dbReference type="GO" id="GO:0006429">
    <property type="term" value="P:leucyl-tRNA aminoacylation"/>
    <property type="evidence" value="ECO:0007669"/>
    <property type="project" value="UniProtKB-UniRule"/>
</dbReference>
<dbReference type="CDD" id="cd07958">
    <property type="entry name" value="Anticodon_Ia_Leu_BEm"/>
    <property type="match status" value="1"/>
</dbReference>
<dbReference type="CDD" id="cd00812">
    <property type="entry name" value="LeuRS_core"/>
    <property type="match status" value="1"/>
</dbReference>
<dbReference type="FunFam" id="1.10.730.10:FF:000003">
    <property type="entry name" value="Leucine--tRNA ligase"/>
    <property type="match status" value="1"/>
</dbReference>
<dbReference type="FunFam" id="2.20.28.290:FF:000001">
    <property type="entry name" value="Leucine--tRNA ligase"/>
    <property type="match status" value="1"/>
</dbReference>
<dbReference type="FunFam" id="3.10.20.590:FF:000001">
    <property type="entry name" value="Leucine--tRNA ligase"/>
    <property type="match status" value="1"/>
</dbReference>
<dbReference type="FunFam" id="3.40.50.620:FF:000003">
    <property type="entry name" value="Leucine--tRNA ligase"/>
    <property type="match status" value="1"/>
</dbReference>
<dbReference type="FunFam" id="3.40.50.620:FF:000051">
    <property type="entry name" value="Leucine--tRNA ligase"/>
    <property type="match status" value="1"/>
</dbReference>
<dbReference type="FunFam" id="3.90.740.10:FF:000012">
    <property type="entry name" value="Leucine--tRNA ligase"/>
    <property type="match status" value="1"/>
</dbReference>
<dbReference type="Gene3D" id="2.20.28.290">
    <property type="match status" value="1"/>
</dbReference>
<dbReference type="Gene3D" id="3.10.20.590">
    <property type="match status" value="1"/>
</dbReference>
<dbReference type="Gene3D" id="3.40.50.620">
    <property type="entry name" value="HUPs"/>
    <property type="match status" value="2"/>
</dbReference>
<dbReference type="Gene3D" id="1.10.730.10">
    <property type="entry name" value="Isoleucyl-tRNA Synthetase, Domain 1"/>
    <property type="match status" value="1"/>
</dbReference>
<dbReference type="Gene3D" id="3.90.740.10">
    <property type="entry name" value="Valyl/Leucyl/Isoleucyl-tRNA synthetase, editing domain"/>
    <property type="match status" value="1"/>
</dbReference>
<dbReference type="HAMAP" id="MF_00049_B">
    <property type="entry name" value="Leu_tRNA_synth_B"/>
    <property type="match status" value="1"/>
</dbReference>
<dbReference type="InterPro" id="IPR001412">
    <property type="entry name" value="aa-tRNA-synth_I_CS"/>
</dbReference>
<dbReference type="InterPro" id="IPR002300">
    <property type="entry name" value="aa-tRNA-synth_Ia"/>
</dbReference>
<dbReference type="InterPro" id="IPR002302">
    <property type="entry name" value="Leu-tRNA-ligase"/>
</dbReference>
<dbReference type="InterPro" id="IPR025709">
    <property type="entry name" value="Leu_tRNA-synth_edit"/>
</dbReference>
<dbReference type="InterPro" id="IPR013155">
    <property type="entry name" value="M/V/L/I-tRNA-synth_anticd-bd"/>
</dbReference>
<dbReference type="InterPro" id="IPR015413">
    <property type="entry name" value="Methionyl/Leucyl_tRNA_Synth"/>
</dbReference>
<dbReference type="InterPro" id="IPR014729">
    <property type="entry name" value="Rossmann-like_a/b/a_fold"/>
</dbReference>
<dbReference type="InterPro" id="IPR009080">
    <property type="entry name" value="tRNAsynth_Ia_anticodon-bd"/>
</dbReference>
<dbReference type="InterPro" id="IPR009008">
    <property type="entry name" value="Val/Leu/Ile-tRNA-synth_edit"/>
</dbReference>
<dbReference type="NCBIfam" id="TIGR00396">
    <property type="entry name" value="leuS_bact"/>
    <property type="match status" value="1"/>
</dbReference>
<dbReference type="PANTHER" id="PTHR43740:SF2">
    <property type="entry name" value="LEUCINE--TRNA LIGASE, MITOCHONDRIAL"/>
    <property type="match status" value="1"/>
</dbReference>
<dbReference type="PANTHER" id="PTHR43740">
    <property type="entry name" value="LEUCYL-TRNA SYNTHETASE"/>
    <property type="match status" value="1"/>
</dbReference>
<dbReference type="Pfam" id="PF08264">
    <property type="entry name" value="Anticodon_1"/>
    <property type="match status" value="1"/>
</dbReference>
<dbReference type="Pfam" id="PF00133">
    <property type="entry name" value="tRNA-synt_1"/>
    <property type="match status" value="2"/>
</dbReference>
<dbReference type="Pfam" id="PF13603">
    <property type="entry name" value="tRNA-synt_1_2"/>
    <property type="match status" value="1"/>
</dbReference>
<dbReference type="Pfam" id="PF09334">
    <property type="entry name" value="tRNA-synt_1g"/>
    <property type="match status" value="1"/>
</dbReference>
<dbReference type="PRINTS" id="PR00985">
    <property type="entry name" value="TRNASYNTHLEU"/>
</dbReference>
<dbReference type="SUPFAM" id="SSF47323">
    <property type="entry name" value="Anticodon-binding domain of a subclass of class I aminoacyl-tRNA synthetases"/>
    <property type="match status" value="1"/>
</dbReference>
<dbReference type="SUPFAM" id="SSF52374">
    <property type="entry name" value="Nucleotidylyl transferase"/>
    <property type="match status" value="1"/>
</dbReference>
<dbReference type="SUPFAM" id="SSF50677">
    <property type="entry name" value="ValRS/IleRS/LeuRS editing domain"/>
    <property type="match status" value="1"/>
</dbReference>
<dbReference type="PROSITE" id="PS00178">
    <property type="entry name" value="AA_TRNA_LIGASE_I"/>
    <property type="match status" value="1"/>
</dbReference>